<keyword id="KW-1003">Cell membrane</keyword>
<keyword id="KW-0472">Membrane</keyword>
<keyword id="KW-1185">Reference proteome</keyword>
<keyword id="KW-0812">Transmembrane</keyword>
<keyword id="KW-1133">Transmembrane helix</keyword>
<feature type="chain" id="PRO_0000104028" description="Uncharacterized protein Rv2325c">
    <location>
        <begin position="1"/>
        <end position="282"/>
    </location>
</feature>
<feature type="transmembrane region" description="Helical" evidence="1">
    <location>
        <begin position="18"/>
        <end position="38"/>
    </location>
</feature>
<feature type="transmembrane region" description="Helical" evidence="1">
    <location>
        <begin position="40"/>
        <end position="60"/>
    </location>
</feature>
<feature type="transmembrane region" description="Helical" evidence="1">
    <location>
        <begin position="87"/>
        <end position="107"/>
    </location>
</feature>
<feature type="transmembrane region" description="Helical" evidence="1">
    <location>
        <begin position="119"/>
        <end position="139"/>
    </location>
</feature>
<feature type="transmembrane region" description="Helical" evidence="1">
    <location>
        <begin position="164"/>
        <end position="184"/>
    </location>
</feature>
<feature type="transmembrane region" description="Helical" evidence="1">
    <location>
        <begin position="260"/>
        <end position="280"/>
    </location>
</feature>
<sequence length="282" mass="29956">MTTTSAPARNGTRRPSRPIVLLIPVPGSSVIHDLWAGTKLLVVFGISVLLTFYPGWVTIGMMAALVLAAARIAHIPRGALPSVPRWLWIVLAIGFLTAALAGGTPVVAVGGVQLGLGGALHFLRITALSVVLLALGAMVSWTTNVAEISPAVATLGRPFRVLRIPVDEWAVALALALRAFPMLIDEFQVLYAARRLRPKRMPPSRKARRQRHARELIDLLAAAITVTLRRADEMGDAITARGGTGQLSAHPGRPKLADWVTLAITAMASGTAVAIESLILHS</sequence>
<accession>P9WPI7</accession>
<accession>L0TBZ8</accession>
<accession>P64997</accession>
<accession>P71887</accession>
<comment type="subcellular location">
    <subcellularLocation>
        <location evidence="2">Cell membrane</location>
        <topology evidence="2">Multi-pass membrane protein</topology>
    </subcellularLocation>
</comment>
<comment type="similarity">
    <text evidence="2">Belongs to the CbiQ family.</text>
</comment>
<dbReference type="EMBL" id="AL123456">
    <property type="protein sequence ID" value="CCP45112.1"/>
    <property type="molecule type" value="Genomic_DNA"/>
</dbReference>
<dbReference type="PIR" id="F70704">
    <property type="entry name" value="F70704"/>
</dbReference>
<dbReference type="RefSeq" id="NP_216841.1">
    <property type="nucleotide sequence ID" value="NC_000962.3"/>
</dbReference>
<dbReference type="RefSeq" id="WP_003411966.1">
    <property type="nucleotide sequence ID" value="NZ_NVQJ01000012.1"/>
</dbReference>
<dbReference type="SMR" id="P9WPI7"/>
<dbReference type="FunCoup" id="P9WPI7">
    <property type="interactions" value="83"/>
</dbReference>
<dbReference type="STRING" id="83332.Rv2325c"/>
<dbReference type="PaxDb" id="83332-Rv2325c"/>
<dbReference type="DNASU" id="886271"/>
<dbReference type="GeneID" id="886271"/>
<dbReference type="KEGG" id="mtu:Rv2325c"/>
<dbReference type="KEGG" id="mtv:RVBD_2325c"/>
<dbReference type="TubercuList" id="Rv2325c"/>
<dbReference type="eggNOG" id="COG0619">
    <property type="taxonomic scope" value="Bacteria"/>
</dbReference>
<dbReference type="InParanoid" id="P9WPI7"/>
<dbReference type="OrthoDB" id="4640601at2"/>
<dbReference type="PhylomeDB" id="P9WPI7"/>
<dbReference type="Proteomes" id="UP000001584">
    <property type="component" value="Chromosome"/>
</dbReference>
<dbReference type="GO" id="GO:0005886">
    <property type="term" value="C:plasma membrane"/>
    <property type="evidence" value="ECO:0007005"/>
    <property type="project" value="MTBBASE"/>
</dbReference>
<dbReference type="CDD" id="cd16914">
    <property type="entry name" value="EcfT"/>
    <property type="match status" value="1"/>
</dbReference>
<dbReference type="InterPro" id="IPR003339">
    <property type="entry name" value="ABC/ECF_trnsptr_transmembrane"/>
</dbReference>
<dbReference type="PANTHER" id="PTHR33514">
    <property type="entry name" value="PROTEIN ABCI12, CHLOROPLASTIC"/>
    <property type="match status" value="1"/>
</dbReference>
<dbReference type="PANTHER" id="PTHR33514:SF13">
    <property type="entry name" value="PROTEIN ABCI12, CHLOROPLASTIC"/>
    <property type="match status" value="1"/>
</dbReference>
<dbReference type="Pfam" id="PF02361">
    <property type="entry name" value="CbiQ"/>
    <property type="match status" value="1"/>
</dbReference>
<organism>
    <name type="scientific">Mycobacterium tuberculosis (strain ATCC 25618 / H37Rv)</name>
    <dbReference type="NCBI Taxonomy" id="83332"/>
    <lineage>
        <taxon>Bacteria</taxon>
        <taxon>Bacillati</taxon>
        <taxon>Actinomycetota</taxon>
        <taxon>Actinomycetes</taxon>
        <taxon>Mycobacteriales</taxon>
        <taxon>Mycobacteriaceae</taxon>
        <taxon>Mycobacterium</taxon>
        <taxon>Mycobacterium tuberculosis complex</taxon>
    </lineage>
</organism>
<proteinExistence type="evidence at protein level"/>
<evidence type="ECO:0000255" key="1"/>
<evidence type="ECO:0000305" key="2"/>
<reference key="1">
    <citation type="journal article" date="1998" name="Nature">
        <title>Deciphering the biology of Mycobacterium tuberculosis from the complete genome sequence.</title>
        <authorList>
            <person name="Cole S.T."/>
            <person name="Brosch R."/>
            <person name="Parkhill J."/>
            <person name="Garnier T."/>
            <person name="Churcher C.M."/>
            <person name="Harris D.E."/>
            <person name="Gordon S.V."/>
            <person name="Eiglmeier K."/>
            <person name="Gas S."/>
            <person name="Barry C.E. III"/>
            <person name="Tekaia F."/>
            <person name="Badcock K."/>
            <person name="Basham D."/>
            <person name="Brown D."/>
            <person name="Chillingworth T."/>
            <person name="Connor R."/>
            <person name="Davies R.M."/>
            <person name="Devlin K."/>
            <person name="Feltwell T."/>
            <person name="Gentles S."/>
            <person name="Hamlin N."/>
            <person name="Holroyd S."/>
            <person name="Hornsby T."/>
            <person name="Jagels K."/>
            <person name="Krogh A."/>
            <person name="McLean J."/>
            <person name="Moule S."/>
            <person name="Murphy L.D."/>
            <person name="Oliver S."/>
            <person name="Osborne J."/>
            <person name="Quail M.A."/>
            <person name="Rajandream M.A."/>
            <person name="Rogers J."/>
            <person name="Rutter S."/>
            <person name="Seeger K."/>
            <person name="Skelton S."/>
            <person name="Squares S."/>
            <person name="Squares R."/>
            <person name="Sulston J.E."/>
            <person name="Taylor K."/>
            <person name="Whitehead S."/>
            <person name="Barrell B.G."/>
        </authorList>
    </citation>
    <scope>NUCLEOTIDE SEQUENCE [LARGE SCALE GENOMIC DNA]</scope>
    <source>
        <strain>ATCC 25618 / H37Rv</strain>
    </source>
</reference>
<reference key="2">
    <citation type="journal article" date="2011" name="Mol. Cell. Proteomics">
        <title>Proteogenomic analysis of Mycobacterium tuberculosis by high resolution mass spectrometry.</title>
        <authorList>
            <person name="Kelkar D.S."/>
            <person name="Kumar D."/>
            <person name="Kumar P."/>
            <person name="Balakrishnan L."/>
            <person name="Muthusamy B."/>
            <person name="Yadav A.K."/>
            <person name="Shrivastava P."/>
            <person name="Marimuthu A."/>
            <person name="Anand S."/>
            <person name="Sundaram H."/>
            <person name="Kingsbury R."/>
            <person name="Harsha H.C."/>
            <person name="Nair B."/>
            <person name="Prasad T.S."/>
            <person name="Chauhan D.S."/>
            <person name="Katoch K."/>
            <person name="Katoch V.M."/>
            <person name="Kumar P."/>
            <person name="Chaerkady R."/>
            <person name="Ramachandran S."/>
            <person name="Dash D."/>
            <person name="Pandey A."/>
        </authorList>
    </citation>
    <scope>IDENTIFICATION BY MASS SPECTROMETRY [LARGE SCALE ANALYSIS]</scope>
    <source>
        <strain>ATCC 25618 / H37Rv</strain>
    </source>
</reference>
<protein>
    <recommendedName>
        <fullName>Uncharacterized protein Rv2325c</fullName>
    </recommendedName>
</protein>
<gene>
    <name type="ordered locus">Rv2325c</name>
    <name type="ORF">MTCY3G12.09</name>
</gene>
<name>Y2325_MYCTU</name>